<accession>O97179</accession>
<accession>C9QP91</accession>
<accession>C9QPH4</accession>
<accession>Q5S4C4</accession>
<accession>Q5S4H2</accession>
<accession>Q5S4J6</accession>
<accession>Q9VBI7</accession>
<name>ESM6_DROME</name>
<dbReference type="EMBL" id="AJ012204">
    <property type="protein sequence ID" value="CAB39177.1"/>
    <property type="molecule type" value="Genomic_DNA"/>
</dbReference>
<dbReference type="EMBL" id="AY779906">
    <property type="protein sequence ID" value="AAV59056.1"/>
    <property type="molecule type" value="Genomic_DNA"/>
</dbReference>
<dbReference type="EMBL" id="AY779907">
    <property type="protein sequence ID" value="AAV59068.1"/>
    <property type="molecule type" value="Genomic_DNA"/>
</dbReference>
<dbReference type="EMBL" id="AY779908">
    <property type="protein sequence ID" value="AAV59080.1"/>
    <property type="molecule type" value="Genomic_DNA"/>
</dbReference>
<dbReference type="EMBL" id="AY779909">
    <property type="protein sequence ID" value="AAV59092.1"/>
    <property type="molecule type" value="Genomic_DNA"/>
</dbReference>
<dbReference type="EMBL" id="AY779910">
    <property type="protein sequence ID" value="AAV59104.1"/>
    <property type="molecule type" value="Genomic_DNA"/>
</dbReference>
<dbReference type="EMBL" id="AY779911">
    <property type="protein sequence ID" value="AAV59116.1"/>
    <property type="molecule type" value="Genomic_DNA"/>
</dbReference>
<dbReference type="EMBL" id="AY779912">
    <property type="protein sequence ID" value="AAV59128.1"/>
    <property type="molecule type" value="Genomic_DNA"/>
</dbReference>
<dbReference type="EMBL" id="AY779913">
    <property type="protein sequence ID" value="AAV59140.1"/>
    <property type="molecule type" value="Genomic_DNA"/>
</dbReference>
<dbReference type="EMBL" id="AY779914">
    <property type="protein sequence ID" value="AAV59152.1"/>
    <property type="molecule type" value="Genomic_DNA"/>
</dbReference>
<dbReference type="EMBL" id="AY779915">
    <property type="protein sequence ID" value="AAV59164.1"/>
    <property type="molecule type" value="Genomic_DNA"/>
</dbReference>
<dbReference type="EMBL" id="AY779916">
    <property type="protein sequence ID" value="AAV59176.1"/>
    <property type="molecule type" value="Genomic_DNA"/>
</dbReference>
<dbReference type="EMBL" id="AY779917">
    <property type="protein sequence ID" value="AAV59188.1"/>
    <property type="molecule type" value="Genomic_DNA"/>
</dbReference>
<dbReference type="EMBL" id="AY779918">
    <property type="protein sequence ID" value="AAV59200.1"/>
    <property type="molecule type" value="Genomic_DNA"/>
</dbReference>
<dbReference type="EMBL" id="AY779919">
    <property type="protein sequence ID" value="AAV59212.1"/>
    <property type="molecule type" value="Genomic_DNA"/>
</dbReference>
<dbReference type="EMBL" id="AY779920">
    <property type="protein sequence ID" value="AAV59224.1"/>
    <property type="molecule type" value="Genomic_DNA"/>
</dbReference>
<dbReference type="EMBL" id="AY779921">
    <property type="protein sequence ID" value="AAV59236.1"/>
    <property type="molecule type" value="Genomic_DNA"/>
</dbReference>
<dbReference type="EMBL" id="AE014297">
    <property type="protein sequence ID" value="AAF56553.1"/>
    <property type="molecule type" value="Genomic_DNA"/>
</dbReference>
<dbReference type="EMBL" id="BT099973">
    <property type="protein sequence ID" value="ACX53654.1"/>
    <property type="molecule type" value="mRNA"/>
</dbReference>
<dbReference type="EMBL" id="BT100088">
    <property type="protein sequence ID" value="ACX61629.3"/>
    <property type="molecule type" value="mRNA"/>
</dbReference>
<dbReference type="RefSeq" id="NP_524512.2">
    <property type="nucleotide sequence ID" value="NM_079788.3"/>
</dbReference>
<dbReference type="BioGRID" id="68059">
    <property type="interactions" value="1"/>
</dbReference>
<dbReference type="STRING" id="7227.FBpp0084333"/>
<dbReference type="PaxDb" id="7227-FBpp0084333"/>
<dbReference type="DNASU" id="43159"/>
<dbReference type="EnsemblMetazoa" id="FBtr0084959">
    <property type="protein sequence ID" value="FBpp0084333"/>
    <property type="gene ID" value="FBgn0002632"/>
</dbReference>
<dbReference type="GeneID" id="43159"/>
<dbReference type="KEGG" id="dme:Dmel_CG8354"/>
<dbReference type="AGR" id="FB:FBgn0002632"/>
<dbReference type="CTD" id="43159"/>
<dbReference type="FlyBase" id="FBgn0002632">
    <property type="gene designation" value="E(spl)m6-BFM"/>
</dbReference>
<dbReference type="VEuPathDB" id="VectorBase:FBgn0002632"/>
<dbReference type="eggNOG" id="ENOG502TBGY">
    <property type="taxonomic scope" value="Eukaryota"/>
</dbReference>
<dbReference type="HOGENOM" id="CLU_2560759_0_0_1"/>
<dbReference type="InParanoid" id="O97179"/>
<dbReference type="OMA" id="CQHYESL"/>
<dbReference type="OrthoDB" id="7846409at2759"/>
<dbReference type="PhylomeDB" id="O97179"/>
<dbReference type="BioGRID-ORCS" id="43159">
    <property type="hits" value="0 hits in 1 CRISPR screen"/>
</dbReference>
<dbReference type="GenomeRNAi" id="43159"/>
<dbReference type="PRO" id="PR:O97179"/>
<dbReference type="Proteomes" id="UP000000803">
    <property type="component" value="Chromosome 3R"/>
</dbReference>
<dbReference type="Bgee" id="FBgn0002632">
    <property type="expression patterns" value="Expressed in T neuron T5b (Drosophila) in embryonic/larval optic lobe (Drosophila) and 20 other cell types or tissues"/>
</dbReference>
<dbReference type="GO" id="GO:0031625">
    <property type="term" value="F:ubiquitin protein ligase binding"/>
    <property type="evidence" value="ECO:0000353"/>
    <property type="project" value="FlyBase"/>
</dbReference>
<dbReference type="GO" id="GO:0001708">
    <property type="term" value="P:cell fate specification"/>
    <property type="evidence" value="ECO:0000315"/>
    <property type="project" value="FlyBase"/>
</dbReference>
<dbReference type="GO" id="GO:0045746">
    <property type="term" value="P:negative regulation of Notch signaling pathway"/>
    <property type="evidence" value="ECO:0000315"/>
    <property type="project" value="FlyBase"/>
</dbReference>
<dbReference type="GO" id="GO:0007399">
    <property type="term" value="P:nervous system development"/>
    <property type="evidence" value="ECO:0007669"/>
    <property type="project" value="UniProtKB-KW"/>
</dbReference>
<dbReference type="GO" id="GO:0007423">
    <property type="term" value="P:sensory organ development"/>
    <property type="evidence" value="ECO:0000315"/>
    <property type="project" value="FlyBase"/>
</dbReference>
<keyword id="KW-0217">Developmental protein</keyword>
<keyword id="KW-0221">Differentiation</keyword>
<keyword id="KW-0524">Neurogenesis</keyword>
<keyword id="KW-1185">Reference proteome</keyword>
<gene>
    <name evidence="4" type="primary">E(spl)m6-BFM</name>
    <name evidence="3" type="synonym">m6</name>
    <name evidence="4" type="ORF">CG8354</name>
</gene>
<comment type="developmental stage">
    <text>Expressed at the time when separation of neural and epidermal precursors cells occurs. Expressed within neuronal cells in the embryo. Later in development, accumulates within the developing central nervous system. After germ band retraction, found in brain, ventral nerve cord and in presumptive peripheral nervous system.</text>
</comment>
<proteinExistence type="evidence at transcript level"/>
<reference key="1">
    <citation type="journal article" date="1999" name="Mech. Dev.">
        <title>The Enhancer of split complex of Drosophila melanogaster harbors three classes of Notch responsive genes.</title>
        <authorList>
            <person name="Wurmbach E."/>
            <person name="Wech I."/>
            <person name="Preiss A."/>
        </authorList>
    </citation>
    <scope>NUCLEOTIDE SEQUENCE [GENOMIC DNA]</scope>
    <scope>VARIANT HIS-21</scope>
    <source>
        <tissue>Embryo</tissue>
    </source>
</reference>
<reference key="2">
    <citation type="journal article" date="2005" name="Mol. Biol. Evol.">
        <title>Identifying signatures of selection at the enhancer of split neurogenic gene complex in Drosophila.</title>
        <authorList>
            <person name="Macdonald S.J."/>
            <person name="Long A.D."/>
        </authorList>
    </citation>
    <scope>NUCLEOTIDE SEQUENCE [GENOMIC DNA]</scope>
    <scope>VARIANTS LEU-20 AND HIS-21</scope>
    <source>
        <strain>NVIII-1</strain>
        <strain>NVIII-18</strain>
        <strain>NVIII-2</strain>
        <strain>NVIII-22</strain>
        <strain>NVIII-24</strain>
        <strain>NVIII-28</strain>
        <strain>NVIII-41</strain>
        <strain>NVIII-42</strain>
        <strain>NVIII-46</strain>
        <strain>NVIII-5</strain>
        <strain>NVIII-9</strain>
        <strain>NVIII-m11</strain>
        <strain>NVIII-m12</strain>
        <strain>NVIII-m13</strain>
        <strain>NVIII-m15</strain>
        <strain>NVIII-m19</strain>
    </source>
</reference>
<reference key="3">
    <citation type="journal article" date="2000" name="Science">
        <title>The genome sequence of Drosophila melanogaster.</title>
        <authorList>
            <person name="Adams M.D."/>
            <person name="Celniker S.E."/>
            <person name="Holt R.A."/>
            <person name="Evans C.A."/>
            <person name="Gocayne J.D."/>
            <person name="Amanatides P.G."/>
            <person name="Scherer S.E."/>
            <person name="Li P.W."/>
            <person name="Hoskins R.A."/>
            <person name="Galle R.F."/>
            <person name="George R.A."/>
            <person name="Lewis S.E."/>
            <person name="Richards S."/>
            <person name="Ashburner M."/>
            <person name="Henderson S.N."/>
            <person name="Sutton G.G."/>
            <person name="Wortman J.R."/>
            <person name="Yandell M.D."/>
            <person name="Zhang Q."/>
            <person name="Chen L.X."/>
            <person name="Brandon R.C."/>
            <person name="Rogers Y.-H.C."/>
            <person name="Blazej R.G."/>
            <person name="Champe M."/>
            <person name="Pfeiffer B.D."/>
            <person name="Wan K.H."/>
            <person name="Doyle C."/>
            <person name="Baxter E.G."/>
            <person name="Helt G."/>
            <person name="Nelson C.R."/>
            <person name="Miklos G.L.G."/>
            <person name="Abril J.F."/>
            <person name="Agbayani A."/>
            <person name="An H.-J."/>
            <person name="Andrews-Pfannkoch C."/>
            <person name="Baldwin D."/>
            <person name="Ballew R.M."/>
            <person name="Basu A."/>
            <person name="Baxendale J."/>
            <person name="Bayraktaroglu L."/>
            <person name="Beasley E.M."/>
            <person name="Beeson K.Y."/>
            <person name="Benos P.V."/>
            <person name="Berman B.P."/>
            <person name="Bhandari D."/>
            <person name="Bolshakov S."/>
            <person name="Borkova D."/>
            <person name="Botchan M.R."/>
            <person name="Bouck J."/>
            <person name="Brokstein P."/>
            <person name="Brottier P."/>
            <person name="Burtis K.C."/>
            <person name="Busam D.A."/>
            <person name="Butler H."/>
            <person name="Cadieu E."/>
            <person name="Center A."/>
            <person name="Chandra I."/>
            <person name="Cherry J.M."/>
            <person name="Cawley S."/>
            <person name="Dahlke C."/>
            <person name="Davenport L.B."/>
            <person name="Davies P."/>
            <person name="de Pablos B."/>
            <person name="Delcher A."/>
            <person name="Deng Z."/>
            <person name="Mays A.D."/>
            <person name="Dew I."/>
            <person name="Dietz S.M."/>
            <person name="Dodson K."/>
            <person name="Doup L.E."/>
            <person name="Downes M."/>
            <person name="Dugan-Rocha S."/>
            <person name="Dunkov B.C."/>
            <person name="Dunn P."/>
            <person name="Durbin K.J."/>
            <person name="Evangelista C.C."/>
            <person name="Ferraz C."/>
            <person name="Ferriera S."/>
            <person name="Fleischmann W."/>
            <person name="Fosler C."/>
            <person name="Gabrielian A.E."/>
            <person name="Garg N.S."/>
            <person name="Gelbart W.M."/>
            <person name="Glasser K."/>
            <person name="Glodek A."/>
            <person name="Gong F."/>
            <person name="Gorrell J.H."/>
            <person name="Gu Z."/>
            <person name="Guan P."/>
            <person name="Harris M."/>
            <person name="Harris N.L."/>
            <person name="Harvey D.A."/>
            <person name="Heiman T.J."/>
            <person name="Hernandez J.R."/>
            <person name="Houck J."/>
            <person name="Hostin D."/>
            <person name="Houston K.A."/>
            <person name="Howland T.J."/>
            <person name="Wei M.-H."/>
            <person name="Ibegwam C."/>
            <person name="Jalali M."/>
            <person name="Kalush F."/>
            <person name="Karpen G.H."/>
            <person name="Ke Z."/>
            <person name="Kennison J.A."/>
            <person name="Ketchum K.A."/>
            <person name="Kimmel B.E."/>
            <person name="Kodira C.D."/>
            <person name="Kraft C.L."/>
            <person name="Kravitz S."/>
            <person name="Kulp D."/>
            <person name="Lai Z."/>
            <person name="Lasko P."/>
            <person name="Lei Y."/>
            <person name="Levitsky A.A."/>
            <person name="Li J.H."/>
            <person name="Li Z."/>
            <person name="Liang Y."/>
            <person name="Lin X."/>
            <person name="Liu X."/>
            <person name="Mattei B."/>
            <person name="McIntosh T.C."/>
            <person name="McLeod M.P."/>
            <person name="McPherson D."/>
            <person name="Merkulov G."/>
            <person name="Milshina N.V."/>
            <person name="Mobarry C."/>
            <person name="Morris J."/>
            <person name="Moshrefi A."/>
            <person name="Mount S.M."/>
            <person name="Moy M."/>
            <person name="Murphy B."/>
            <person name="Murphy L."/>
            <person name="Muzny D.M."/>
            <person name="Nelson D.L."/>
            <person name="Nelson D.R."/>
            <person name="Nelson K.A."/>
            <person name="Nixon K."/>
            <person name="Nusskern D.R."/>
            <person name="Pacleb J.M."/>
            <person name="Palazzolo M."/>
            <person name="Pittman G.S."/>
            <person name="Pan S."/>
            <person name="Pollard J."/>
            <person name="Puri V."/>
            <person name="Reese M.G."/>
            <person name="Reinert K."/>
            <person name="Remington K."/>
            <person name="Saunders R.D.C."/>
            <person name="Scheeler F."/>
            <person name="Shen H."/>
            <person name="Shue B.C."/>
            <person name="Siden-Kiamos I."/>
            <person name="Simpson M."/>
            <person name="Skupski M.P."/>
            <person name="Smith T.J."/>
            <person name="Spier E."/>
            <person name="Spradling A.C."/>
            <person name="Stapleton M."/>
            <person name="Strong R."/>
            <person name="Sun E."/>
            <person name="Svirskas R."/>
            <person name="Tector C."/>
            <person name="Turner R."/>
            <person name="Venter E."/>
            <person name="Wang A.H."/>
            <person name="Wang X."/>
            <person name="Wang Z.-Y."/>
            <person name="Wassarman D.A."/>
            <person name="Weinstock G.M."/>
            <person name="Weissenbach J."/>
            <person name="Williams S.M."/>
            <person name="Woodage T."/>
            <person name="Worley K.C."/>
            <person name="Wu D."/>
            <person name="Yang S."/>
            <person name="Yao Q.A."/>
            <person name="Ye J."/>
            <person name="Yeh R.-F."/>
            <person name="Zaveri J.S."/>
            <person name="Zhan M."/>
            <person name="Zhang G."/>
            <person name="Zhao Q."/>
            <person name="Zheng L."/>
            <person name="Zheng X.H."/>
            <person name="Zhong F.N."/>
            <person name="Zhong W."/>
            <person name="Zhou X."/>
            <person name="Zhu S.C."/>
            <person name="Zhu X."/>
            <person name="Smith H.O."/>
            <person name="Gibbs R.A."/>
            <person name="Myers E.W."/>
            <person name="Rubin G.M."/>
            <person name="Venter J.C."/>
        </authorList>
    </citation>
    <scope>NUCLEOTIDE SEQUENCE [LARGE SCALE GENOMIC DNA]</scope>
    <source>
        <strain>Berkeley</strain>
    </source>
</reference>
<reference key="4">
    <citation type="journal article" date="2002" name="Genome Biol.">
        <title>Annotation of the Drosophila melanogaster euchromatic genome: a systematic review.</title>
        <authorList>
            <person name="Misra S."/>
            <person name="Crosby M.A."/>
            <person name="Mungall C.J."/>
            <person name="Matthews B.B."/>
            <person name="Campbell K.S."/>
            <person name="Hradecky P."/>
            <person name="Huang Y."/>
            <person name="Kaminker J.S."/>
            <person name="Millburn G.H."/>
            <person name="Prochnik S.E."/>
            <person name="Smith C.D."/>
            <person name="Tupy J.L."/>
            <person name="Whitfield E.J."/>
            <person name="Bayraktaroglu L."/>
            <person name="Berman B.P."/>
            <person name="Bettencourt B.R."/>
            <person name="Celniker S.E."/>
            <person name="de Grey A.D.N.J."/>
            <person name="Drysdale R.A."/>
            <person name="Harris N.L."/>
            <person name="Richter J."/>
            <person name="Russo S."/>
            <person name="Schroeder A.J."/>
            <person name="Shu S.Q."/>
            <person name="Stapleton M."/>
            <person name="Yamada C."/>
            <person name="Ashburner M."/>
            <person name="Gelbart W.M."/>
            <person name="Rubin G.M."/>
            <person name="Lewis S.E."/>
        </authorList>
    </citation>
    <scope>GENOME REANNOTATION</scope>
    <source>
        <strain>Berkeley</strain>
    </source>
</reference>
<reference key="5">
    <citation type="submission" date="2010-02" db="EMBL/GenBank/DDBJ databases">
        <authorList>
            <person name="Carlson J.W."/>
            <person name="Booth B."/>
            <person name="Frise E."/>
            <person name="Park S."/>
            <person name="Sandler J."/>
            <person name="Wan K.H."/>
            <person name="Yu C."/>
            <person name="Celniker S.E."/>
        </authorList>
    </citation>
    <scope>NUCLEOTIDE SEQUENCE [LARGE SCALE MRNA]</scope>
    <source>
        <strain>Berkeley</strain>
    </source>
</reference>
<evidence type="ECO:0000269" key="1">
    <source>
    </source>
</evidence>
<evidence type="ECO:0000269" key="2">
    <source>
    </source>
</evidence>
<evidence type="ECO:0000303" key="3">
    <source>
    </source>
</evidence>
<evidence type="ECO:0000312" key="4">
    <source>
        <dbReference type="FlyBase" id="FBgn0002632"/>
    </source>
</evidence>
<sequence length="70" mass="8059">MSKVKNLLAKMLQRFGKNSSQADSQRYDSLEEIAQNQANERMLRATQVGLEEHLVICLETEAGSFYWHSQ</sequence>
<feature type="chain" id="PRO_0000087060" description="Enhancer of split m6 protein">
    <location>
        <begin position="1"/>
        <end position="70"/>
    </location>
</feature>
<feature type="sequence variant" description="In strain: NVIII-5, NVIII-9, NVIII-46 and NVIII-41." evidence="2">
    <original>S</original>
    <variation>L</variation>
    <location>
        <position position="20"/>
    </location>
</feature>
<feature type="sequence variant" description="In strain: NVIII-1, NVIII-2, NVIII-5, NVIII-9, NVIII-18, NVIII-22, NVIII-24, NVIII-41, NVIII-42, NVIII-46, NVIII-m11, NVIII-m12, NVIII-m13, NVIII-m15 and NVIII-m19." evidence="1 2">
    <original>Q</original>
    <variation>H</variation>
    <location>
        <position position="21"/>
    </location>
</feature>
<protein>
    <recommendedName>
        <fullName evidence="3">Enhancer of split m6 protein</fullName>
        <shortName evidence="3">E(spl)m6</shortName>
    </recommendedName>
</protein>
<organism>
    <name type="scientific">Drosophila melanogaster</name>
    <name type="common">Fruit fly</name>
    <dbReference type="NCBI Taxonomy" id="7227"/>
    <lineage>
        <taxon>Eukaryota</taxon>
        <taxon>Metazoa</taxon>
        <taxon>Ecdysozoa</taxon>
        <taxon>Arthropoda</taxon>
        <taxon>Hexapoda</taxon>
        <taxon>Insecta</taxon>
        <taxon>Pterygota</taxon>
        <taxon>Neoptera</taxon>
        <taxon>Endopterygota</taxon>
        <taxon>Diptera</taxon>
        <taxon>Brachycera</taxon>
        <taxon>Muscomorpha</taxon>
        <taxon>Ephydroidea</taxon>
        <taxon>Drosophilidae</taxon>
        <taxon>Drosophila</taxon>
        <taxon>Sophophora</taxon>
    </lineage>
</organism>